<sequence>MADPLYSSLKTVNSTSKVTPESLVFQTKILTPEEAKNVINEKIAFKPLLLVPSLNLEKQGDRKESVASKKRKKLSSKEKKKLQLNVVPKIADYSQFKHLHSMWCSYILEVIAGCTGESLMAKLAKAEYQGAYMQVLRSKSTTRVGLEGICIHESKHMLSLITKENRVVRVPKQDSVMKVIVDVPQRKLVFELYTQHLLLRAGDRSNKRFKSKNTIDL</sequence>
<evidence type="ECO:0000250" key="1"/>
<evidence type="ECO:0000269" key="2">
    <source>
    </source>
</evidence>
<evidence type="ECO:0000305" key="3"/>
<accession>Q9P7W9</accession>
<accession>Q7Z988</accession>
<protein>
    <recommendedName>
        <fullName>Probable ribonuclease P protein subunit 1</fullName>
        <ecNumber>3.1.26.5</ecNumber>
    </recommendedName>
</protein>
<name>RNP1_SCHPO</name>
<reference key="1">
    <citation type="journal article" date="2002" name="Nature">
        <title>The genome sequence of Schizosaccharomyces pombe.</title>
        <authorList>
            <person name="Wood V."/>
            <person name="Gwilliam R."/>
            <person name="Rajandream M.A."/>
            <person name="Lyne M.H."/>
            <person name="Lyne R."/>
            <person name="Stewart A."/>
            <person name="Sgouros J.G."/>
            <person name="Peat N."/>
            <person name="Hayles J."/>
            <person name="Baker S.G."/>
            <person name="Basham D."/>
            <person name="Bowman S."/>
            <person name="Brooks K."/>
            <person name="Brown D."/>
            <person name="Brown S."/>
            <person name="Chillingworth T."/>
            <person name="Churcher C.M."/>
            <person name="Collins M."/>
            <person name="Connor R."/>
            <person name="Cronin A."/>
            <person name="Davis P."/>
            <person name="Feltwell T."/>
            <person name="Fraser A."/>
            <person name="Gentles S."/>
            <person name="Goble A."/>
            <person name="Hamlin N."/>
            <person name="Harris D.E."/>
            <person name="Hidalgo J."/>
            <person name="Hodgson G."/>
            <person name="Holroyd S."/>
            <person name="Hornsby T."/>
            <person name="Howarth S."/>
            <person name="Huckle E.J."/>
            <person name="Hunt S."/>
            <person name="Jagels K."/>
            <person name="James K.D."/>
            <person name="Jones L."/>
            <person name="Jones M."/>
            <person name="Leather S."/>
            <person name="McDonald S."/>
            <person name="McLean J."/>
            <person name="Mooney P."/>
            <person name="Moule S."/>
            <person name="Mungall K.L."/>
            <person name="Murphy L.D."/>
            <person name="Niblett D."/>
            <person name="Odell C."/>
            <person name="Oliver K."/>
            <person name="O'Neil S."/>
            <person name="Pearson D."/>
            <person name="Quail M.A."/>
            <person name="Rabbinowitsch E."/>
            <person name="Rutherford K.M."/>
            <person name="Rutter S."/>
            <person name="Saunders D."/>
            <person name="Seeger K."/>
            <person name="Sharp S."/>
            <person name="Skelton J."/>
            <person name="Simmonds M.N."/>
            <person name="Squares R."/>
            <person name="Squares S."/>
            <person name="Stevens K."/>
            <person name="Taylor K."/>
            <person name="Taylor R.G."/>
            <person name="Tivey A."/>
            <person name="Walsh S.V."/>
            <person name="Warren T."/>
            <person name="Whitehead S."/>
            <person name="Woodward J.R."/>
            <person name="Volckaert G."/>
            <person name="Aert R."/>
            <person name="Robben J."/>
            <person name="Grymonprez B."/>
            <person name="Weltjens I."/>
            <person name="Vanstreels E."/>
            <person name="Rieger M."/>
            <person name="Schaefer M."/>
            <person name="Mueller-Auer S."/>
            <person name="Gabel C."/>
            <person name="Fuchs M."/>
            <person name="Duesterhoeft A."/>
            <person name="Fritzc C."/>
            <person name="Holzer E."/>
            <person name="Moestl D."/>
            <person name="Hilbert H."/>
            <person name="Borzym K."/>
            <person name="Langer I."/>
            <person name="Beck A."/>
            <person name="Lehrach H."/>
            <person name="Reinhardt R."/>
            <person name="Pohl T.M."/>
            <person name="Eger P."/>
            <person name="Zimmermann W."/>
            <person name="Wedler H."/>
            <person name="Wambutt R."/>
            <person name="Purnelle B."/>
            <person name="Goffeau A."/>
            <person name="Cadieu E."/>
            <person name="Dreano S."/>
            <person name="Gloux S."/>
            <person name="Lelaure V."/>
            <person name="Mottier S."/>
            <person name="Galibert F."/>
            <person name="Aves S.J."/>
            <person name="Xiang Z."/>
            <person name="Hunt C."/>
            <person name="Moore K."/>
            <person name="Hurst S.M."/>
            <person name="Lucas M."/>
            <person name="Rochet M."/>
            <person name="Gaillardin C."/>
            <person name="Tallada V.A."/>
            <person name="Garzon A."/>
            <person name="Thode G."/>
            <person name="Daga R.R."/>
            <person name="Cruzado L."/>
            <person name="Jimenez J."/>
            <person name="Sanchez M."/>
            <person name="del Rey F."/>
            <person name="Benito J."/>
            <person name="Dominguez A."/>
            <person name="Revuelta J.L."/>
            <person name="Moreno S."/>
            <person name="Armstrong J."/>
            <person name="Forsburg S.L."/>
            <person name="Cerutti L."/>
            <person name="Lowe T."/>
            <person name="McCombie W.R."/>
            <person name="Paulsen I."/>
            <person name="Potashkin J."/>
            <person name="Shpakovski G.V."/>
            <person name="Ussery D."/>
            <person name="Barrell B.G."/>
            <person name="Nurse P."/>
        </authorList>
    </citation>
    <scope>NUCLEOTIDE SEQUENCE [LARGE SCALE GENOMIC DNA]</scope>
    <source>
        <strain>972 / ATCC 24843</strain>
    </source>
</reference>
<reference key="2">
    <citation type="journal article" date="2006" name="Nat. Biotechnol.">
        <title>ORFeome cloning and global analysis of protein localization in the fission yeast Schizosaccharomyces pombe.</title>
        <authorList>
            <person name="Matsuyama A."/>
            <person name="Arai R."/>
            <person name="Yashiroda Y."/>
            <person name="Shirai A."/>
            <person name="Kamata A."/>
            <person name="Sekido S."/>
            <person name="Kobayashi Y."/>
            <person name="Hashimoto A."/>
            <person name="Hamamoto M."/>
            <person name="Hiraoka Y."/>
            <person name="Horinouchi S."/>
            <person name="Yoshida M."/>
        </authorList>
    </citation>
    <scope>SUBCELLULAR LOCATION [LARGE SCALE ANALYSIS]</scope>
</reference>
<gene>
    <name type="ORF">SPBC1703.01c</name>
    <name type="ORF">SPBP4H10.22c</name>
</gene>
<comment type="function">
    <text evidence="1">Part of ribonuclease P, a protein complex that generates mature tRNA molecules by cleaving their 5'-ends.</text>
</comment>
<comment type="catalytic activity">
    <reaction>
        <text>Endonucleolytic cleavage of RNA, removing 5'-extranucleotides from tRNA precursor.</text>
        <dbReference type="EC" id="3.1.26.5"/>
    </reaction>
</comment>
<comment type="subcellular location">
    <subcellularLocation>
        <location evidence="2">Nucleus</location>
        <location evidence="2">Nucleolus</location>
    </subcellularLocation>
</comment>
<comment type="similarity">
    <text evidence="3">Belongs to the eukaryotic/archaeal RNase P protein component 1 family.</text>
</comment>
<feature type="chain" id="PRO_0000128423" description="Probable ribonuclease P protein subunit 1">
    <location>
        <begin position="1"/>
        <end position="217"/>
    </location>
</feature>
<organism>
    <name type="scientific">Schizosaccharomyces pombe (strain 972 / ATCC 24843)</name>
    <name type="common">Fission yeast</name>
    <dbReference type="NCBI Taxonomy" id="284812"/>
    <lineage>
        <taxon>Eukaryota</taxon>
        <taxon>Fungi</taxon>
        <taxon>Dikarya</taxon>
        <taxon>Ascomycota</taxon>
        <taxon>Taphrinomycotina</taxon>
        <taxon>Schizosaccharomycetes</taxon>
        <taxon>Schizosaccharomycetales</taxon>
        <taxon>Schizosaccharomycetaceae</taxon>
        <taxon>Schizosaccharomyces</taxon>
    </lineage>
</organism>
<proteinExistence type="inferred from homology"/>
<dbReference type="EC" id="3.1.26.5"/>
<dbReference type="EMBL" id="CU329671">
    <property type="protein sequence ID" value="CAD99134.2"/>
    <property type="molecule type" value="Genomic_DNA"/>
</dbReference>
<dbReference type="PIR" id="T50314">
    <property type="entry name" value="T50314"/>
</dbReference>
<dbReference type="RefSeq" id="XP_001713139.1">
    <property type="nucleotide sequence ID" value="XM_001713087.2"/>
</dbReference>
<dbReference type="SMR" id="Q9P7W9"/>
<dbReference type="BioGRID" id="276491">
    <property type="interactions" value="3"/>
</dbReference>
<dbReference type="FunCoup" id="Q9P7W9">
    <property type="interactions" value="314"/>
</dbReference>
<dbReference type="STRING" id="284812.Q9P7W9"/>
<dbReference type="PaxDb" id="4896-SPBC1703.01c.1"/>
<dbReference type="EnsemblFungi" id="SPBC1703.01c.1">
    <property type="protein sequence ID" value="SPBC1703.01c.1:pep"/>
    <property type="gene ID" value="SPBC1703.01c"/>
</dbReference>
<dbReference type="PomBase" id="SPBC1703.01c"/>
<dbReference type="VEuPathDB" id="FungiDB:SPBC1703.01c"/>
<dbReference type="eggNOG" id="KOG4046">
    <property type="taxonomic scope" value="Eukaryota"/>
</dbReference>
<dbReference type="HOGENOM" id="CLU_078577_0_0_1"/>
<dbReference type="InParanoid" id="Q9P7W9"/>
<dbReference type="OMA" id="IPKSECV"/>
<dbReference type="PhylomeDB" id="Q9P7W9"/>
<dbReference type="PRO" id="PR:Q9P7W9"/>
<dbReference type="Proteomes" id="UP000002485">
    <property type="component" value="Chromosome II"/>
</dbReference>
<dbReference type="GO" id="GO:0005655">
    <property type="term" value="C:nucleolar ribonuclease P complex"/>
    <property type="evidence" value="ECO:0000266"/>
    <property type="project" value="PomBase"/>
</dbReference>
<dbReference type="GO" id="GO:0005730">
    <property type="term" value="C:nucleolus"/>
    <property type="evidence" value="ECO:0007005"/>
    <property type="project" value="PomBase"/>
</dbReference>
<dbReference type="GO" id="GO:0000172">
    <property type="term" value="C:ribonuclease MRP complex"/>
    <property type="evidence" value="ECO:0000269"/>
    <property type="project" value="PomBase"/>
</dbReference>
<dbReference type="GO" id="GO:0030677">
    <property type="term" value="C:ribonuclease P complex"/>
    <property type="evidence" value="ECO:0000318"/>
    <property type="project" value="GO_Central"/>
</dbReference>
<dbReference type="GO" id="GO:0004526">
    <property type="term" value="F:ribonuclease P activity"/>
    <property type="evidence" value="ECO:0007669"/>
    <property type="project" value="UniProtKB-EC"/>
</dbReference>
<dbReference type="GO" id="GO:0033204">
    <property type="term" value="F:ribonuclease P RNA binding"/>
    <property type="evidence" value="ECO:0000318"/>
    <property type="project" value="GO_Central"/>
</dbReference>
<dbReference type="GO" id="GO:0000447">
    <property type="term" value="P:endonucleolytic cleavage in ITS1 to separate SSU-rRNA from 5.8S rRNA and LSU-rRNA from tricistronic rRNA transcript (SSU-rRNA, 5.8S rRNA, LSU-rRNA)"/>
    <property type="evidence" value="ECO:0000314"/>
    <property type="project" value="PomBase"/>
</dbReference>
<dbReference type="GO" id="GO:0006364">
    <property type="term" value="P:rRNA processing"/>
    <property type="evidence" value="ECO:0000318"/>
    <property type="project" value="GO_Central"/>
</dbReference>
<dbReference type="GO" id="GO:0001682">
    <property type="term" value="P:tRNA 5'-leader removal"/>
    <property type="evidence" value="ECO:0007669"/>
    <property type="project" value="InterPro"/>
</dbReference>
<dbReference type="GO" id="GO:0008033">
    <property type="term" value="P:tRNA processing"/>
    <property type="evidence" value="ECO:0000314"/>
    <property type="project" value="PomBase"/>
</dbReference>
<dbReference type="Gene3D" id="2.30.30.210">
    <property type="entry name" value="Ribonuclease P/MRP, subunit p29"/>
    <property type="match status" value="1"/>
</dbReference>
<dbReference type="InterPro" id="IPR016848">
    <property type="entry name" value="RNase_P/MRP_Rpp29-subunit"/>
</dbReference>
<dbReference type="InterPro" id="IPR036980">
    <property type="entry name" value="RNase_P/MRP_Rpp29_sf"/>
</dbReference>
<dbReference type="InterPro" id="IPR023534">
    <property type="entry name" value="Rof/RNase_P-like"/>
</dbReference>
<dbReference type="InterPro" id="IPR002730">
    <property type="entry name" value="Rpp29/RNP1"/>
</dbReference>
<dbReference type="PANTHER" id="PTHR13348:SF0">
    <property type="entry name" value="RIBONUCLEASE P PROTEIN SUBUNIT P29"/>
    <property type="match status" value="1"/>
</dbReference>
<dbReference type="PANTHER" id="PTHR13348">
    <property type="entry name" value="RIBONUCLEASE P SUBUNIT P29"/>
    <property type="match status" value="1"/>
</dbReference>
<dbReference type="Pfam" id="PF01868">
    <property type="entry name" value="RNase_P-MRP_p29"/>
    <property type="match status" value="1"/>
</dbReference>
<dbReference type="PIRSF" id="PIRSF027081">
    <property type="entry name" value="RNase_P/MRP_p29_subunit"/>
    <property type="match status" value="1"/>
</dbReference>
<dbReference type="SMART" id="SM00538">
    <property type="entry name" value="POP4"/>
    <property type="match status" value="1"/>
</dbReference>
<dbReference type="SUPFAM" id="SSF101744">
    <property type="entry name" value="Rof/RNase P subunit-like"/>
    <property type="match status" value="1"/>
</dbReference>
<keyword id="KW-0378">Hydrolase</keyword>
<keyword id="KW-0539">Nucleus</keyword>
<keyword id="KW-1185">Reference proteome</keyword>
<keyword id="KW-0819">tRNA processing</keyword>